<reference key="1">
    <citation type="journal article" date="1994" name="DNA Res.">
        <title>Systematic sequencing of the 180 kilobase region of the Bacillus subtilis chromosome containing the replication origin.</title>
        <authorList>
            <person name="Ogasawara N."/>
            <person name="Nakai S."/>
            <person name="Yoshikawa H."/>
        </authorList>
    </citation>
    <scope>NUCLEOTIDE SEQUENCE [GENOMIC DNA]</scope>
    <source>
        <strain>168</strain>
    </source>
</reference>
<reference key="2">
    <citation type="journal article" date="1997" name="Nature">
        <title>The complete genome sequence of the Gram-positive bacterium Bacillus subtilis.</title>
        <authorList>
            <person name="Kunst F."/>
            <person name="Ogasawara N."/>
            <person name="Moszer I."/>
            <person name="Albertini A.M."/>
            <person name="Alloni G."/>
            <person name="Azevedo V."/>
            <person name="Bertero M.G."/>
            <person name="Bessieres P."/>
            <person name="Bolotin A."/>
            <person name="Borchert S."/>
            <person name="Borriss R."/>
            <person name="Boursier L."/>
            <person name="Brans A."/>
            <person name="Braun M."/>
            <person name="Brignell S.C."/>
            <person name="Bron S."/>
            <person name="Brouillet S."/>
            <person name="Bruschi C.V."/>
            <person name="Caldwell B."/>
            <person name="Capuano V."/>
            <person name="Carter N.M."/>
            <person name="Choi S.-K."/>
            <person name="Codani J.-J."/>
            <person name="Connerton I.F."/>
            <person name="Cummings N.J."/>
            <person name="Daniel R.A."/>
            <person name="Denizot F."/>
            <person name="Devine K.M."/>
            <person name="Duesterhoeft A."/>
            <person name="Ehrlich S.D."/>
            <person name="Emmerson P.T."/>
            <person name="Entian K.-D."/>
            <person name="Errington J."/>
            <person name="Fabret C."/>
            <person name="Ferrari E."/>
            <person name="Foulger D."/>
            <person name="Fritz C."/>
            <person name="Fujita M."/>
            <person name="Fujita Y."/>
            <person name="Fuma S."/>
            <person name="Galizzi A."/>
            <person name="Galleron N."/>
            <person name="Ghim S.-Y."/>
            <person name="Glaser P."/>
            <person name="Goffeau A."/>
            <person name="Golightly E.J."/>
            <person name="Grandi G."/>
            <person name="Guiseppi G."/>
            <person name="Guy B.J."/>
            <person name="Haga K."/>
            <person name="Haiech J."/>
            <person name="Harwood C.R."/>
            <person name="Henaut A."/>
            <person name="Hilbert H."/>
            <person name="Holsappel S."/>
            <person name="Hosono S."/>
            <person name="Hullo M.-F."/>
            <person name="Itaya M."/>
            <person name="Jones L.-M."/>
            <person name="Joris B."/>
            <person name="Karamata D."/>
            <person name="Kasahara Y."/>
            <person name="Klaerr-Blanchard M."/>
            <person name="Klein C."/>
            <person name="Kobayashi Y."/>
            <person name="Koetter P."/>
            <person name="Koningstein G."/>
            <person name="Krogh S."/>
            <person name="Kumano M."/>
            <person name="Kurita K."/>
            <person name="Lapidus A."/>
            <person name="Lardinois S."/>
            <person name="Lauber J."/>
            <person name="Lazarevic V."/>
            <person name="Lee S.-M."/>
            <person name="Levine A."/>
            <person name="Liu H."/>
            <person name="Masuda S."/>
            <person name="Mauel C."/>
            <person name="Medigue C."/>
            <person name="Medina N."/>
            <person name="Mellado R.P."/>
            <person name="Mizuno M."/>
            <person name="Moestl D."/>
            <person name="Nakai S."/>
            <person name="Noback M."/>
            <person name="Noone D."/>
            <person name="O'Reilly M."/>
            <person name="Ogawa K."/>
            <person name="Ogiwara A."/>
            <person name="Oudega B."/>
            <person name="Park S.-H."/>
            <person name="Parro V."/>
            <person name="Pohl T.M."/>
            <person name="Portetelle D."/>
            <person name="Porwollik S."/>
            <person name="Prescott A.M."/>
            <person name="Presecan E."/>
            <person name="Pujic P."/>
            <person name="Purnelle B."/>
            <person name="Rapoport G."/>
            <person name="Rey M."/>
            <person name="Reynolds S."/>
            <person name="Rieger M."/>
            <person name="Rivolta C."/>
            <person name="Rocha E."/>
            <person name="Roche B."/>
            <person name="Rose M."/>
            <person name="Sadaie Y."/>
            <person name="Sato T."/>
            <person name="Scanlan E."/>
            <person name="Schleich S."/>
            <person name="Schroeter R."/>
            <person name="Scoffone F."/>
            <person name="Sekiguchi J."/>
            <person name="Sekowska A."/>
            <person name="Seror S.J."/>
            <person name="Serror P."/>
            <person name="Shin B.-S."/>
            <person name="Soldo B."/>
            <person name="Sorokin A."/>
            <person name="Tacconi E."/>
            <person name="Takagi T."/>
            <person name="Takahashi H."/>
            <person name="Takemaru K."/>
            <person name="Takeuchi M."/>
            <person name="Tamakoshi A."/>
            <person name="Tanaka T."/>
            <person name="Terpstra P."/>
            <person name="Tognoni A."/>
            <person name="Tosato V."/>
            <person name="Uchiyama S."/>
            <person name="Vandenbol M."/>
            <person name="Vannier F."/>
            <person name="Vassarotti A."/>
            <person name="Viari A."/>
            <person name="Wambutt R."/>
            <person name="Wedler E."/>
            <person name="Wedler H."/>
            <person name="Weitzenegger T."/>
            <person name="Winters P."/>
            <person name="Wipat A."/>
            <person name="Yamamoto H."/>
            <person name="Yamane K."/>
            <person name="Yasumoto K."/>
            <person name="Yata K."/>
            <person name="Yoshida K."/>
            <person name="Yoshikawa H.-F."/>
            <person name="Zumstein E."/>
            <person name="Yoshikawa H."/>
            <person name="Danchin A."/>
        </authorList>
    </citation>
    <scope>NUCLEOTIDE SEQUENCE [LARGE SCALE GENOMIC DNA]</scope>
    <source>
        <strain>168</strain>
    </source>
</reference>
<organism>
    <name type="scientific">Bacillus subtilis (strain 168)</name>
    <dbReference type="NCBI Taxonomy" id="224308"/>
    <lineage>
        <taxon>Bacteria</taxon>
        <taxon>Bacillati</taxon>
        <taxon>Bacillota</taxon>
        <taxon>Bacilli</taxon>
        <taxon>Bacillales</taxon>
        <taxon>Bacillaceae</taxon>
        <taxon>Bacillus</taxon>
    </lineage>
</organism>
<comment type="function">
    <text evidence="1">Redox regulated molecular chaperone. Protects both thermally unfolding and oxidatively damaged proteins from irreversible aggregation. Plays an important role in the bacterial defense system toward oxidative stress.</text>
</comment>
<comment type="subcellular location">
    <subcellularLocation>
        <location evidence="1">Cytoplasm</location>
    </subcellularLocation>
</comment>
<comment type="PTM">
    <text evidence="1">Under oxidizing conditions two disulfide bonds are formed involving the reactive cysteines. Under reducing conditions zinc is bound to the reactive cysteines and the protein is inactive.</text>
</comment>
<comment type="similarity">
    <text evidence="1">Belongs to the HSP33 family.</text>
</comment>
<name>HSLO_BACSU</name>
<dbReference type="EMBL" id="D26185">
    <property type="protein sequence ID" value="BAA05306.1"/>
    <property type="molecule type" value="Genomic_DNA"/>
</dbReference>
<dbReference type="EMBL" id="AL009126">
    <property type="protein sequence ID" value="CAB11847.1"/>
    <property type="molecule type" value="Genomic_DNA"/>
</dbReference>
<dbReference type="PIR" id="S66101">
    <property type="entry name" value="S66101"/>
</dbReference>
<dbReference type="RefSeq" id="NP_387952.1">
    <property type="nucleotide sequence ID" value="NC_000964.3"/>
</dbReference>
<dbReference type="RefSeq" id="WP_003226695.1">
    <property type="nucleotide sequence ID" value="NZ_OZ025638.1"/>
</dbReference>
<dbReference type="PDB" id="1VZY">
    <property type="method" value="X-ray"/>
    <property type="resolution" value="1.97 A"/>
    <property type="chains" value="A/B=1-291"/>
</dbReference>
<dbReference type="PDBsum" id="1VZY"/>
<dbReference type="SMR" id="P37565"/>
<dbReference type="FunCoup" id="P37565">
    <property type="interactions" value="246"/>
</dbReference>
<dbReference type="STRING" id="224308.BSU00710"/>
<dbReference type="PaxDb" id="224308-BSU00710"/>
<dbReference type="DNASU" id="936762"/>
<dbReference type="EnsemblBacteria" id="CAB11847">
    <property type="protein sequence ID" value="CAB11847"/>
    <property type="gene ID" value="BSU_00710"/>
</dbReference>
<dbReference type="GeneID" id="936762"/>
<dbReference type="KEGG" id="bsu:BSU00710"/>
<dbReference type="PATRIC" id="fig|224308.179.peg.71"/>
<dbReference type="eggNOG" id="COG1281">
    <property type="taxonomic scope" value="Bacteria"/>
</dbReference>
<dbReference type="InParanoid" id="P37565"/>
<dbReference type="OrthoDB" id="9776534at2"/>
<dbReference type="PhylomeDB" id="P37565"/>
<dbReference type="BioCyc" id="BSUB:BSU00710-MONOMER"/>
<dbReference type="EvolutionaryTrace" id="P37565"/>
<dbReference type="Proteomes" id="UP000001570">
    <property type="component" value="Chromosome"/>
</dbReference>
<dbReference type="GO" id="GO:0005737">
    <property type="term" value="C:cytoplasm"/>
    <property type="evidence" value="ECO:0000318"/>
    <property type="project" value="GO_Central"/>
</dbReference>
<dbReference type="GO" id="GO:0044183">
    <property type="term" value="F:protein folding chaperone"/>
    <property type="evidence" value="ECO:0000318"/>
    <property type="project" value="GO_Central"/>
</dbReference>
<dbReference type="GO" id="GO:0051082">
    <property type="term" value="F:unfolded protein binding"/>
    <property type="evidence" value="ECO:0007669"/>
    <property type="project" value="UniProtKB-UniRule"/>
</dbReference>
<dbReference type="GO" id="GO:0042026">
    <property type="term" value="P:protein refolding"/>
    <property type="evidence" value="ECO:0000318"/>
    <property type="project" value="GO_Central"/>
</dbReference>
<dbReference type="CDD" id="cd00498">
    <property type="entry name" value="Hsp33"/>
    <property type="match status" value="1"/>
</dbReference>
<dbReference type="Gene3D" id="3.55.30.10">
    <property type="entry name" value="Hsp33 domain"/>
    <property type="match status" value="1"/>
</dbReference>
<dbReference type="Gene3D" id="3.90.1280.10">
    <property type="entry name" value="HSP33 redox switch-like"/>
    <property type="match status" value="1"/>
</dbReference>
<dbReference type="HAMAP" id="MF_00117">
    <property type="entry name" value="HslO"/>
    <property type="match status" value="1"/>
</dbReference>
<dbReference type="InterPro" id="IPR000397">
    <property type="entry name" value="Heat_shock_Hsp33"/>
</dbReference>
<dbReference type="InterPro" id="IPR016154">
    <property type="entry name" value="Heat_shock_Hsp33_C"/>
</dbReference>
<dbReference type="InterPro" id="IPR016153">
    <property type="entry name" value="Heat_shock_Hsp33_N"/>
</dbReference>
<dbReference type="NCBIfam" id="NF001033">
    <property type="entry name" value="PRK00114.1"/>
    <property type="match status" value="1"/>
</dbReference>
<dbReference type="PANTHER" id="PTHR30111">
    <property type="entry name" value="33 KDA CHAPERONIN"/>
    <property type="match status" value="1"/>
</dbReference>
<dbReference type="PANTHER" id="PTHR30111:SF1">
    <property type="entry name" value="33 KDA CHAPERONIN"/>
    <property type="match status" value="1"/>
</dbReference>
<dbReference type="Pfam" id="PF01430">
    <property type="entry name" value="HSP33"/>
    <property type="match status" value="1"/>
</dbReference>
<dbReference type="PIRSF" id="PIRSF005261">
    <property type="entry name" value="Heat_shock_Hsp33"/>
    <property type="match status" value="1"/>
</dbReference>
<dbReference type="SUPFAM" id="SSF64397">
    <property type="entry name" value="Hsp33 domain"/>
    <property type="match status" value="1"/>
</dbReference>
<dbReference type="SUPFAM" id="SSF118352">
    <property type="entry name" value="HSP33 redox switch-like"/>
    <property type="match status" value="1"/>
</dbReference>
<protein>
    <recommendedName>
        <fullName evidence="1">33 kDa chaperonin</fullName>
    </recommendedName>
    <alternativeName>
        <fullName evidence="1">Heat shock protein 33 homolog</fullName>
        <shortName evidence="1">HSP33</shortName>
    </alternativeName>
</protein>
<evidence type="ECO:0000255" key="1">
    <source>
        <dbReference type="HAMAP-Rule" id="MF_00117"/>
    </source>
</evidence>
<evidence type="ECO:0007829" key="2">
    <source>
        <dbReference type="PDB" id="1VZY"/>
    </source>
</evidence>
<proteinExistence type="evidence at protein level"/>
<keyword id="KW-0002">3D-structure</keyword>
<keyword id="KW-0143">Chaperone</keyword>
<keyword id="KW-0963">Cytoplasm</keyword>
<keyword id="KW-1015">Disulfide bond</keyword>
<keyword id="KW-0676">Redox-active center</keyword>
<keyword id="KW-1185">Reference proteome</keyword>
<keyword id="KW-0862">Zinc</keyword>
<gene>
    <name evidence="1" type="primary">hslO</name>
    <name type="synonym">yacC</name>
    <name type="ordered locus">BSU00710</name>
</gene>
<accession>P37565</accession>
<feature type="chain" id="PRO_0000192167" description="33 kDa chaperonin">
    <location>
        <begin position="1"/>
        <end position="291"/>
    </location>
</feature>
<feature type="disulfide bond" description="Redox-active" evidence="1">
    <location>
        <begin position="235"/>
        <end position="237"/>
    </location>
</feature>
<feature type="disulfide bond" description="Redox-active" evidence="1">
    <location>
        <begin position="268"/>
        <end position="271"/>
    </location>
</feature>
<feature type="strand" evidence="2">
    <location>
        <begin position="3"/>
        <end position="9"/>
    </location>
</feature>
<feature type="turn" evidence="2">
    <location>
        <begin position="10"/>
        <end position="13"/>
    </location>
</feature>
<feature type="strand" evidence="2">
    <location>
        <begin position="14"/>
        <end position="20"/>
    </location>
</feature>
<feature type="helix" evidence="2">
    <location>
        <begin position="22"/>
        <end position="32"/>
    </location>
</feature>
<feature type="helix" evidence="2">
    <location>
        <begin position="36"/>
        <end position="53"/>
    </location>
</feature>
<feature type="strand" evidence="2">
    <location>
        <begin position="61"/>
        <end position="67"/>
    </location>
</feature>
<feature type="strand" evidence="2">
    <location>
        <begin position="74"/>
        <end position="80"/>
    </location>
</feature>
<feature type="strand" evidence="2">
    <location>
        <begin position="83"/>
        <end position="90"/>
    </location>
</feature>
<feature type="helix" evidence="2">
    <location>
        <begin position="106"/>
        <end position="110"/>
    </location>
</feature>
<feature type="strand" evidence="2">
    <location>
        <begin position="112"/>
        <end position="121"/>
    </location>
</feature>
<feature type="strand" evidence="2">
    <location>
        <begin position="126"/>
        <end position="133"/>
    </location>
</feature>
<feature type="strand" evidence="2">
    <location>
        <begin position="135"/>
        <end position="139"/>
    </location>
</feature>
<feature type="helix" evidence="2">
    <location>
        <begin position="140"/>
        <end position="151"/>
    </location>
</feature>
<feature type="strand" evidence="2">
    <location>
        <begin position="155"/>
        <end position="163"/>
    </location>
</feature>
<feature type="strand" evidence="2">
    <location>
        <begin position="169"/>
        <end position="179"/>
    </location>
</feature>
<feature type="helix" evidence="2">
    <location>
        <begin position="185"/>
        <end position="195"/>
    </location>
</feature>
<feature type="helix" evidence="2">
    <location>
        <begin position="201"/>
        <end position="207"/>
    </location>
</feature>
<feature type="helix" evidence="2">
    <location>
        <begin position="211"/>
        <end position="219"/>
    </location>
</feature>
<feature type="strand" evidence="2">
    <location>
        <begin position="224"/>
        <end position="230"/>
    </location>
</feature>
<feature type="helix" evidence="2">
    <location>
        <begin position="239"/>
        <end position="247"/>
    </location>
</feature>
<feature type="helix" evidence="2">
    <location>
        <begin position="251"/>
        <end position="261"/>
    </location>
</feature>
<feature type="strand" evidence="2">
    <location>
        <begin position="262"/>
        <end position="267"/>
    </location>
</feature>
<feature type="turn" evidence="2">
    <location>
        <begin position="269"/>
        <end position="271"/>
    </location>
</feature>
<feature type="strand" evidence="2">
    <location>
        <begin position="274"/>
        <end position="278"/>
    </location>
</feature>
<feature type="helix" evidence="2">
    <location>
        <begin position="279"/>
        <end position="288"/>
    </location>
</feature>
<sequence>MDYLVKALAYDGKVRAYAARTTDMVNEGQRRHGTWPTASAALGRTMTASLMLGAMLKGDDKLTVKIEGGGPIGAIVADANAKGEVRAYVSNPQVHFDLNEQGKLDVRRAVGTNGTLSVVKDLGLREFFTGQVEIVSGELGDDFTYYLVSSEQVPSSVGVGVLVNPDNTILAAGGFIIQLMPGTDDETITKIEQRLSQVEPISKLIQKGLTPEEILEEVLGEKPEILETMPVRFHCPCSKERFETAILGLGKKEIQDMIEEDGQAEAVCHFCNEKYLFTKEELEGLRDQTTR</sequence>